<reference key="1">
    <citation type="submission" date="2004-11" db="EMBL/GenBank/DDBJ databases">
        <authorList>
            <consortium name="The German cDNA consortium"/>
        </authorList>
    </citation>
    <scope>NUCLEOTIDE SEQUENCE [LARGE SCALE MRNA]</scope>
    <source>
        <tissue>Heart</tissue>
    </source>
</reference>
<keyword id="KW-1185">Reference proteome</keyword>
<gene>
    <name type="primary">SMPX</name>
    <name type="synonym">SRMX</name>
</gene>
<sequence length="86" mass="9314">MSKQPVSNVRAIQANINIPMGAFRPGAGQPPRRKECTPEVEEGVPPTSDEEKKPIPGAKKLPGPAVNLSEIQNIKSELKYVPKAEQ</sequence>
<proteinExistence type="inferred from homology"/>
<name>SMPX_PONAB</name>
<dbReference type="EMBL" id="CR858763">
    <property type="protein sequence ID" value="CAH90970.1"/>
    <property type="status" value="ALT_INIT"/>
    <property type="molecule type" value="mRNA"/>
</dbReference>
<dbReference type="RefSeq" id="NP_001125559.1">
    <property type="nucleotide sequence ID" value="NM_001132087.1"/>
</dbReference>
<dbReference type="RefSeq" id="XP_009232921.1">
    <property type="nucleotide sequence ID" value="XM_009234646.1"/>
</dbReference>
<dbReference type="RefSeq" id="XP_009232922.1">
    <property type="nucleotide sequence ID" value="XM_009234647.1"/>
</dbReference>
<dbReference type="SMR" id="Q5RB90"/>
<dbReference type="STRING" id="9601.ENSPPYP00000022581"/>
<dbReference type="GeneID" id="100172473"/>
<dbReference type="KEGG" id="pon:100172473"/>
<dbReference type="CTD" id="23676"/>
<dbReference type="eggNOG" id="ENOG502S62J">
    <property type="taxonomic scope" value="Eukaryota"/>
</dbReference>
<dbReference type="HOGENOM" id="CLU_2512070_0_0_1"/>
<dbReference type="InParanoid" id="Q5RB90"/>
<dbReference type="OrthoDB" id="8868927at2759"/>
<dbReference type="TreeFam" id="TF338181"/>
<dbReference type="Proteomes" id="UP000001595">
    <property type="component" value="Unplaced"/>
</dbReference>
<dbReference type="GO" id="GO:0043034">
    <property type="term" value="C:costamere"/>
    <property type="evidence" value="ECO:0007669"/>
    <property type="project" value="TreeGrafter"/>
</dbReference>
<dbReference type="GO" id="GO:0031430">
    <property type="term" value="C:M band"/>
    <property type="evidence" value="ECO:0007669"/>
    <property type="project" value="TreeGrafter"/>
</dbReference>
<dbReference type="GO" id="GO:0005927">
    <property type="term" value="C:muscle tendon junction"/>
    <property type="evidence" value="ECO:0007669"/>
    <property type="project" value="TreeGrafter"/>
</dbReference>
<dbReference type="InterPro" id="IPR029268">
    <property type="entry name" value="Chisel"/>
</dbReference>
<dbReference type="PANTHER" id="PTHR17416">
    <property type="entry name" value="SMALL MUSCULAR PROTEIN"/>
    <property type="match status" value="1"/>
</dbReference>
<dbReference type="PANTHER" id="PTHR17416:SF0">
    <property type="entry name" value="SMALL MUSCULAR PROTEIN"/>
    <property type="match status" value="1"/>
</dbReference>
<dbReference type="Pfam" id="PF15355">
    <property type="entry name" value="Chisel"/>
    <property type="match status" value="1"/>
</dbReference>
<accession>Q5RB90</accession>
<protein>
    <recommendedName>
        <fullName>Small muscular protein</fullName>
    </recommendedName>
    <alternativeName>
        <fullName>Stretch-responsive skeletal muscle protein</fullName>
    </alternativeName>
</protein>
<evidence type="ECO:0000250" key="1"/>
<evidence type="ECO:0000256" key="2">
    <source>
        <dbReference type="SAM" id="MobiDB-lite"/>
    </source>
</evidence>
<evidence type="ECO:0000305" key="3"/>
<feature type="chain" id="PRO_0000071980" description="Small muscular protein">
    <location>
        <begin position="1"/>
        <end position="86"/>
    </location>
</feature>
<feature type="region of interest" description="Disordered" evidence="2">
    <location>
        <begin position="20"/>
        <end position="64"/>
    </location>
</feature>
<comment type="function">
    <text evidence="1">Plays a role in the regulatory network through which muscle cells coordinate their structural and functional states during growth, adaptation, and repair.</text>
</comment>
<comment type="similarity">
    <text evidence="3">Belongs to the SMPX family.</text>
</comment>
<comment type="sequence caution" evidence="3">
    <conflict type="erroneous initiation">
        <sequence resource="EMBL-CDS" id="CAH90970"/>
    </conflict>
</comment>
<organism>
    <name type="scientific">Pongo abelii</name>
    <name type="common">Sumatran orangutan</name>
    <name type="synonym">Pongo pygmaeus abelii</name>
    <dbReference type="NCBI Taxonomy" id="9601"/>
    <lineage>
        <taxon>Eukaryota</taxon>
        <taxon>Metazoa</taxon>
        <taxon>Chordata</taxon>
        <taxon>Craniata</taxon>
        <taxon>Vertebrata</taxon>
        <taxon>Euteleostomi</taxon>
        <taxon>Mammalia</taxon>
        <taxon>Eutheria</taxon>
        <taxon>Euarchontoglires</taxon>
        <taxon>Primates</taxon>
        <taxon>Haplorrhini</taxon>
        <taxon>Catarrhini</taxon>
        <taxon>Hominidae</taxon>
        <taxon>Pongo</taxon>
    </lineage>
</organism>